<sequence>MAAAGEGTPSSRGPRRDPPRRPPRNGYGVYVYPNSFFRYEGEWKAGRKHGHGKLLFKDGSYYEGAFVDGEITGEGRRHWAWSGDTFSGQFVLGEPQGYGVMEYKAGGCYEGEVSHGMREGHGFLVDRDGQVYQGSFHDNKRHGPGQMLFQNGDKYDGDWVRDRRQGHGVLRCADGSTYKGQWHSDVFSGLGSMAHCSGVTYYGLWINGHPAEQATRIVILGPEVMEVAQGSPFSVNVQLLQDHGEIAKSESGRVLQISAGVRYVQLSAYSEVNFFKVDRDNQETLIQTPFGFECIPYPVSSPAAGVPGPRAAKGGAEADVPLPRGDLELHLGALHGQEDTPGGLLARGHAPHCPGACQRVEQGCAEFTDVLLGPPPPGYHPFLFLDSLHKKAGGRSRGGLHPRGTPPTAQEPPGGSRPEGRATEEQAAAAHLGEYVLMIRDVTTPPFLGRRLPPAFKHLRVVAKRAGQPPHVLEEGPEASSSWQAAHSCTPEPPAPR</sequence>
<comment type="alternative products">
    <event type="alternative splicing"/>
    <isoform>
        <id>Q5T089-1</id>
        <name>1</name>
        <sequence type="displayed"/>
    </isoform>
    <isoform>
        <id>Q5T089-2</id>
        <name>2</name>
        <sequence type="described" ref="VSP_019994 VSP_019995"/>
    </isoform>
</comment>
<dbReference type="EMBL" id="AK024003">
    <property type="protein sequence ID" value="BAB14768.1"/>
    <property type="molecule type" value="mRNA"/>
</dbReference>
<dbReference type="EMBL" id="AL589739">
    <property type="status" value="NOT_ANNOTATED_CDS"/>
    <property type="molecule type" value="Genomic_DNA"/>
</dbReference>
<dbReference type="EMBL" id="AL513477">
    <property type="status" value="NOT_ANNOTATED_CDS"/>
    <property type="molecule type" value="Genomic_DNA"/>
</dbReference>
<dbReference type="EMBL" id="BC021704">
    <property type="protein sequence ID" value="AAH21704.1"/>
    <property type="molecule type" value="mRNA"/>
</dbReference>
<dbReference type="CCDS" id="CCDS40.1">
    <molecule id="Q5T089-1"/>
</dbReference>
<dbReference type="CCDS" id="CCDS72688.1">
    <molecule id="Q5T089-2"/>
</dbReference>
<dbReference type="RefSeq" id="NP_001287989.1">
    <molecule id="Q5T089-2"/>
    <property type="nucleotide sequence ID" value="NM_001301060.2"/>
</dbReference>
<dbReference type="RefSeq" id="NP_079124.1">
    <molecule id="Q5T089-1"/>
    <property type="nucleotide sequence ID" value="NM_024848.3"/>
</dbReference>
<dbReference type="SMR" id="Q5T089"/>
<dbReference type="BioGRID" id="122989">
    <property type="interactions" value="4"/>
</dbReference>
<dbReference type="FunCoup" id="Q5T089">
    <property type="interactions" value="104"/>
</dbReference>
<dbReference type="IntAct" id="Q5T089">
    <property type="interactions" value="2"/>
</dbReference>
<dbReference type="STRING" id="9606.ENSP00000367792"/>
<dbReference type="iPTMnet" id="Q5T089"/>
<dbReference type="PhosphoSitePlus" id="Q5T089"/>
<dbReference type="BioMuta" id="MORN1"/>
<dbReference type="DMDM" id="110810454"/>
<dbReference type="MassIVE" id="Q5T089"/>
<dbReference type="PaxDb" id="9606-ENSP00000367792"/>
<dbReference type="PeptideAtlas" id="Q5T089"/>
<dbReference type="ProteomicsDB" id="64135">
    <molecule id="Q5T089-1"/>
</dbReference>
<dbReference type="ProteomicsDB" id="64136">
    <molecule id="Q5T089-2"/>
</dbReference>
<dbReference type="Antibodypedia" id="1621">
    <property type="antibodies" value="77 antibodies from 17 providers"/>
</dbReference>
<dbReference type="DNASU" id="79906"/>
<dbReference type="Ensembl" id="ENST00000378529.7">
    <molecule id="Q5T089-2"/>
    <property type="protein sequence ID" value="ENSP00000367790.3"/>
    <property type="gene ID" value="ENSG00000116151.14"/>
</dbReference>
<dbReference type="Ensembl" id="ENST00000378531.8">
    <molecule id="Q5T089-1"/>
    <property type="protein sequence ID" value="ENSP00000367792.3"/>
    <property type="gene ID" value="ENSG00000116151.14"/>
</dbReference>
<dbReference type="GeneID" id="79906"/>
<dbReference type="KEGG" id="hsa:79906"/>
<dbReference type="MANE-Select" id="ENST00000378531.8">
    <property type="protein sequence ID" value="ENSP00000367792.3"/>
    <property type="RefSeq nucleotide sequence ID" value="NM_024848.3"/>
    <property type="RefSeq protein sequence ID" value="NP_079124.1"/>
</dbReference>
<dbReference type="UCSC" id="uc001ajb.2">
    <molecule id="Q5T089-1"/>
    <property type="organism name" value="human"/>
</dbReference>
<dbReference type="AGR" id="HGNC:25852"/>
<dbReference type="CTD" id="79906"/>
<dbReference type="DisGeNET" id="79906"/>
<dbReference type="GeneCards" id="MORN1"/>
<dbReference type="HGNC" id="HGNC:25852">
    <property type="gene designation" value="MORN1"/>
</dbReference>
<dbReference type="HPA" id="ENSG00000116151">
    <property type="expression patterns" value="Tissue enhanced (brain)"/>
</dbReference>
<dbReference type="neXtProt" id="NX_Q5T089"/>
<dbReference type="OpenTargets" id="ENSG00000116151"/>
<dbReference type="PharmGKB" id="PA142671342"/>
<dbReference type="VEuPathDB" id="HostDB:ENSG00000116151"/>
<dbReference type="eggNOG" id="KOG0231">
    <property type="taxonomic scope" value="Eukaryota"/>
</dbReference>
<dbReference type="GeneTree" id="ENSGT00940000161806"/>
<dbReference type="HOGENOM" id="CLU_031327_0_0_1"/>
<dbReference type="InParanoid" id="Q5T089"/>
<dbReference type="OMA" id="GEYVIMI"/>
<dbReference type="OrthoDB" id="423343at2759"/>
<dbReference type="PAN-GO" id="Q5T089">
    <property type="GO annotations" value="0 GO annotations based on evolutionary models"/>
</dbReference>
<dbReference type="PhylomeDB" id="Q5T089"/>
<dbReference type="TreeFam" id="TF329558"/>
<dbReference type="PathwayCommons" id="Q5T089"/>
<dbReference type="SignaLink" id="Q5T089"/>
<dbReference type="BioGRID-ORCS" id="79906">
    <property type="hits" value="17 hits in 1147 CRISPR screens"/>
</dbReference>
<dbReference type="ChiTaRS" id="MORN1">
    <property type="organism name" value="human"/>
</dbReference>
<dbReference type="GeneWiki" id="Morn_repeat_containing_1"/>
<dbReference type="GenomeRNAi" id="79906"/>
<dbReference type="Pharos" id="Q5T089">
    <property type="development level" value="Tbio"/>
</dbReference>
<dbReference type="PRO" id="PR:Q5T089"/>
<dbReference type="Proteomes" id="UP000005640">
    <property type="component" value="Chromosome 1"/>
</dbReference>
<dbReference type="RNAct" id="Q5T089">
    <property type="molecule type" value="protein"/>
</dbReference>
<dbReference type="Bgee" id="ENSG00000116151">
    <property type="expression patterns" value="Expressed in right uterine tube and 131 other cell types or tissues"/>
</dbReference>
<dbReference type="ExpressionAtlas" id="Q5T089">
    <property type="expression patterns" value="baseline and differential"/>
</dbReference>
<dbReference type="Gene3D" id="2.20.110.10">
    <property type="entry name" value="Histone H3 K4-specific methyltransferase SET7/9 N-terminal domain"/>
    <property type="match status" value="3"/>
</dbReference>
<dbReference type="InterPro" id="IPR003409">
    <property type="entry name" value="MORN"/>
</dbReference>
<dbReference type="PANTHER" id="PTHR23084:SF263">
    <property type="entry name" value="MORN REPEAT-CONTAINING PROTEIN 1"/>
    <property type="match status" value="1"/>
</dbReference>
<dbReference type="PANTHER" id="PTHR23084">
    <property type="entry name" value="PHOSPHATIDYLINOSITOL-4-PHOSPHATE 5-KINASE RELATED"/>
    <property type="match status" value="1"/>
</dbReference>
<dbReference type="Pfam" id="PF02493">
    <property type="entry name" value="MORN"/>
    <property type="match status" value="8"/>
</dbReference>
<dbReference type="SMART" id="SM00698">
    <property type="entry name" value="MORN"/>
    <property type="match status" value="7"/>
</dbReference>
<dbReference type="SUPFAM" id="SSF82185">
    <property type="entry name" value="Histone H3 K4-specific methyltransferase SET7/9 N-terminal domain"/>
    <property type="match status" value="2"/>
</dbReference>
<keyword id="KW-0025">Alternative splicing</keyword>
<keyword id="KW-1267">Proteomics identification</keyword>
<keyword id="KW-1185">Reference proteome</keyword>
<keyword id="KW-0677">Repeat</keyword>
<protein>
    <recommendedName>
        <fullName>MORN repeat-containing protein 1</fullName>
    </recommendedName>
</protein>
<organism>
    <name type="scientific">Homo sapiens</name>
    <name type="common">Human</name>
    <dbReference type="NCBI Taxonomy" id="9606"/>
    <lineage>
        <taxon>Eukaryota</taxon>
        <taxon>Metazoa</taxon>
        <taxon>Chordata</taxon>
        <taxon>Craniata</taxon>
        <taxon>Vertebrata</taxon>
        <taxon>Euteleostomi</taxon>
        <taxon>Mammalia</taxon>
        <taxon>Eutheria</taxon>
        <taxon>Euarchontoglires</taxon>
        <taxon>Primates</taxon>
        <taxon>Haplorrhini</taxon>
        <taxon>Catarrhini</taxon>
        <taxon>Hominidae</taxon>
        <taxon>Homo</taxon>
    </lineage>
</organism>
<gene>
    <name type="primary">MORN1</name>
</gene>
<proteinExistence type="evidence at protein level"/>
<name>MORN1_HUMAN</name>
<reference key="1">
    <citation type="journal article" date="2004" name="Nat. Genet.">
        <title>Complete sequencing and characterization of 21,243 full-length human cDNAs.</title>
        <authorList>
            <person name="Ota T."/>
            <person name="Suzuki Y."/>
            <person name="Nishikawa T."/>
            <person name="Otsuki T."/>
            <person name="Sugiyama T."/>
            <person name="Irie R."/>
            <person name="Wakamatsu A."/>
            <person name="Hayashi K."/>
            <person name="Sato H."/>
            <person name="Nagai K."/>
            <person name="Kimura K."/>
            <person name="Makita H."/>
            <person name="Sekine M."/>
            <person name="Obayashi M."/>
            <person name="Nishi T."/>
            <person name="Shibahara T."/>
            <person name="Tanaka T."/>
            <person name="Ishii S."/>
            <person name="Yamamoto J."/>
            <person name="Saito K."/>
            <person name="Kawai Y."/>
            <person name="Isono Y."/>
            <person name="Nakamura Y."/>
            <person name="Nagahari K."/>
            <person name="Murakami K."/>
            <person name="Yasuda T."/>
            <person name="Iwayanagi T."/>
            <person name="Wagatsuma M."/>
            <person name="Shiratori A."/>
            <person name="Sudo H."/>
            <person name="Hosoiri T."/>
            <person name="Kaku Y."/>
            <person name="Kodaira H."/>
            <person name="Kondo H."/>
            <person name="Sugawara M."/>
            <person name="Takahashi M."/>
            <person name="Kanda K."/>
            <person name="Yokoi T."/>
            <person name="Furuya T."/>
            <person name="Kikkawa E."/>
            <person name="Omura Y."/>
            <person name="Abe K."/>
            <person name="Kamihara K."/>
            <person name="Katsuta N."/>
            <person name="Sato K."/>
            <person name="Tanikawa M."/>
            <person name="Yamazaki M."/>
            <person name="Ninomiya K."/>
            <person name="Ishibashi T."/>
            <person name="Yamashita H."/>
            <person name="Murakawa K."/>
            <person name="Fujimori K."/>
            <person name="Tanai H."/>
            <person name="Kimata M."/>
            <person name="Watanabe M."/>
            <person name="Hiraoka S."/>
            <person name="Chiba Y."/>
            <person name="Ishida S."/>
            <person name="Ono Y."/>
            <person name="Takiguchi S."/>
            <person name="Watanabe S."/>
            <person name="Yosida M."/>
            <person name="Hotuta T."/>
            <person name="Kusano J."/>
            <person name="Kanehori K."/>
            <person name="Takahashi-Fujii A."/>
            <person name="Hara H."/>
            <person name="Tanase T.-O."/>
            <person name="Nomura Y."/>
            <person name="Togiya S."/>
            <person name="Komai F."/>
            <person name="Hara R."/>
            <person name="Takeuchi K."/>
            <person name="Arita M."/>
            <person name="Imose N."/>
            <person name="Musashino K."/>
            <person name="Yuuki H."/>
            <person name="Oshima A."/>
            <person name="Sasaki N."/>
            <person name="Aotsuka S."/>
            <person name="Yoshikawa Y."/>
            <person name="Matsunawa H."/>
            <person name="Ichihara T."/>
            <person name="Shiohata N."/>
            <person name="Sano S."/>
            <person name="Moriya S."/>
            <person name="Momiyama H."/>
            <person name="Satoh N."/>
            <person name="Takami S."/>
            <person name="Terashima Y."/>
            <person name="Suzuki O."/>
            <person name="Nakagawa S."/>
            <person name="Senoh A."/>
            <person name="Mizoguchi H."/>
            <person name="Goto Y."/>
            <person name="Shimizu F."/>
            <person name="Wakebe H."/>
            <person name="Hishigaki H."/>
            <person name="Watanabe T."/>
            <person name="Sugiyama A."/>
            <person name="Takemoto M."/>
            <person name="Kawakami B."/>
            <person name="Yamazaki M."/>
            <person name="Watanabe K."/>
            <person name="Kumagai A."/>
            <person name="Itakura S."/>
            <person name="Fukuzumi Y."/>
            <person name="Fujimori Y."/>
            <person name="Komiyama M."/>
            <person name="Tashiro H."/>
            <person name="Tanigami A."/>
            <person name="Fujiwara T."/>
            <person name="Ono T."/>
            <person name="Yamada K."/>
            <person name="Fujii Y."/>
            <person name="Ozaki K."/>
            <person name="Hirao M."/>
            <person name="Ohmori Y."/>
            <person name="Kawabata A."/>
            <person name="Hikiji T."/>
            <person name="Kobatake N."/>
            <person name="Inagaki H."/>
            <person name="Ikema Y."/>
            <person name="Okamoto S."/>
            <person name="Okitani R."/>
            <person name="Kawakami T."/>
            <person name="Noguchi S."/>
            <person name="Itoh T."/>
            <person name="Shigeta K."/>
            <person name="Senba T."/>
            <person name="Matsumura K."/>
            <person name="Nakajima Y."/>
            <person name="Mizuno T."/>
            <person name="Morinaga M."/>
            <person name="Sasaki M."/>
            <person name="Togashi T."/>
            <person name="Oyama M."/>
            <person name="Hata H."/>
            <person name="Watanabe M."/>
            <person name="Komatsu T."/>
            <person name="Mizushima-Sugano J."/>
            <person name="Satoh T."/>
            <person name="Shirai Y."/>
            <person name="Takahashi Y."/>
            <person name="Nakagawa K."/>
            <person name="Okumura K."/>
            <person name="Nagase T."/>
            <person name="Nomura N."/>
            <person name="Kikuchi H."/>
            <person name="Masuho Y."/>
            <person name="Yamashita R."/>
            <person name="Nakai K."/>
            <person name="Yada T."/>
            <person name="Nakamura Y."/>
            <person name="Ohara O."/>
            <person name="Isogai T."/>
            <person name="Sugano S."/>
        </authorList>
    </citation>
    <scope>NUCLEOTIDE SEQUENCE [LARGE SCALE MRNA] (ISOFORM 1)</scope>
    <source>
        <tissue>Retinoblastoma</tissue>
    </source>
</reference>
<reference key="2">
    <citation type="journal article" date="2006" name="Nature">
        <title>The DNA sequence and biological annotation of human chromosome 1.</title>
        <authorList>
            <person name="Gregory S.G."/>
            <person name="Barlow K.F."/>
            <person name="McLay K.E."/>
            <person name="Kaul R."/>
            <person name="Swarbreck D."/>
            <person name="Dunham A."/>
            <person name="Scott C.E."/>
            <person name="Howe K.L."/>
            <person name="Woodfine K."/>
            <person name="Spencer C.C.A."/>
            <person name="Jones M.C."/>
            <person name="Gillson C."/>
            <person name="Searle S."/>
            <person name="Zhou Y."/>
            <person name="Kokocinski F."/>
            <person name="McDonald L."/>
            <person name="Evans R."/>
            <person name="Phillips K."/>
            <person name="Atkinson A."/>
            <person name="Cooper R."/>
            <person name="Jones C."/>
            <person name="Hall R.E."/>
            <person name="Andrews T.D."/>
            <person name="Lloyd C."/>
            <person name="Ainscough R."/>
            <person name="Almeida J.P."/>
            <person name="Ambrose K.D."/>
            <person name="Anderson F."/>
            <person name="Andrew R.W."/>
            <person name="Ashwell R.I.S."/>
            <person name="Aubin K."/>
            <person name="Babbage A.K."/>
            <person name="Bagguley C.L."/>
            <person name="Bailey J."/>
            <person name="Beasley H."/>
            <person name="Bethel G."/>
            <person name="Bird C.P."/>
            <person name="Bray-Allen S."/>
            <person name="Brown J.Y."/>
            <person name="Brown A.J."/>
            <person name="Buckley D."/>
            <person name="Burton J."/>
            <person name="Bye J."/>
            <person name="Carder C."/>
            <person name="Chapman J.C."/>
            <person name="Clark S.Y."/>
            <person name="Clarke G."/>
            <person name="Clee C."/>
            <person name="Cobley V."/>
            <person name="Collier R.E."/>
            <person name="Corby N."/>
            <person name="Coville G.J."/>
            <person name="Davies J."/>
            <person name="Deadman R."/>
            <person name="Dunn M."/>
            <person name="Earthrowl M."/>
            <person name="Ellington A.G."/>
            <person name="Errington H."/>
            <person name="Frankish A."/>
            <person name="Frankland J."/>
            <person name="French L."/>
            <person name="Garner P."/>
            <person name="Garnett J."/>
            <person name="Gay L."/>
            <person name="Ghori M.R.J."/>
            <person name="Gibson R."/>
            <person name="Gilby L.M."/>
            <person name="Gillett W."/>
            <person name="Glithero R.J."/>
            <person name="Grafham D.V."/>
            <person name="Griffiths C."/>
            <person name="Griffiths-Jones S."/>
            <person name="Grocock R."/>
            <person name="Hammond S."/>
            <person name="Harrison E.S.I."/>
            <person name="Hart E."/>
            <person name="Haugen E."/>
            <person name="Heath P.D."/>
            <person name="Holmes S."/>
            <person name="Holt K."/>
            <person name="Howden P.J."/>
            <person name="Hunt A.R."/>
            <person name="Hunt S.E."/>
            <person name="Hunter G."/>
            <person name="Isherwood J."/>
            <person name="James R."/>
            <person name="Johnson C."/>
            <person name="Johnson D."/>
            <person name="Joy A."/>
            <person name="Kay M."/>
            <person name="Kershaw J.K."/>
            <person name="Kibukawa M."/>
            <person name="Kimberley A.M."/>
            <person name="King A."/>
            <person name="Knights A.J."/>
            <person name="Lad H."/>
            <person name="Laird G."/>
            <person name="Lawlor S."/>
            <person name="Leongamornlert D.A."/>
            <person name="Lloyd D.M."/>
            <person name="Loveland J."/>
            <person name="Lovell J."/>
            <person name="Lush M.J."/>
            <person name="Lyne R."/>
            <person name="Martin S."/>
            <person name="Mashreghi-Mohammadi M."/>
            <person name="Matthews L."/>
            <person name="Matthews N.S.W."/>
            <person name="McLaren S."/>
            <person name="Milne S."/>
            <person name="Mistry S."/>
            <person name="Moore M.J.F."/>
            <person name="Nickerson T."/>
            <person name="O'Dell C.N."/>
            <person name="Oliver K."/>
            <person name="Palmeiri A."/>
            <person name="Palmer S.A."/>
            <person name="Parker A."/>
            <person name="Patel D."/>
            <person name="Pearce A.V."/>
            <person name="Peck A.I."/>
            <person name="Pelan S."/>
            <person name="Phelps K."/>
            <person name="Phillimore B.J."/>
            <person name="Plumb R."/>
            <person name="Rajan J."/>
            <person name="Raymond C."/>
            <person name="Rouse G."/>
            <person name="Saenphimmachak C."/>
            <person name="Sehra H.K."/>
            <person name="Sheridan E."/>
            <person name="Shownkeen R."/>
            <person name="Sims S."/>
            <person name="Skuce C.D."/>
            <person name="Smith M."/>
            <person name="Steward C."/>
            <person name="Subramanian S."/>
            <person name="Sycamore N."/>
            <person name="Tracey A."/>
            <person name="Tromans A."/>
            <person name="Van Helmond Z."/>
            <person name="Wall M."/>
            <person name="Wallis J.M."/>
            <person name="White S."/>
            <person name="Whitehead S.L."/>
            <person name="Wilkinson J.E."/>
            <person name="Willey D.L."/>
            <person name="Williams H."/>
            <person name="Wilming L."/>
            <person name="Wray P.W."/>
            <person name="Wu Z."/>
            <person name="Coulson A."/>
            <person name="Vaudin M."/>
            <person name="Sulston J.E."/>
            <person name="Durbin R.M."/>
            <person name="Hubbard T."/>
            <person name="Wooster R."/>
            <person name="Dunham I."/>
            <person name="Carter N.P."/>
            <person name="McVean G."/>
            <person name="Ross M.T."/>
            <person name="Harrow J."/>
            <person name="Olson M.V."/>
            <person name="Beck S."/>
            <person name="Rogers J."/>
            <person name="Bentley D.R."/>
        </authorList>
    </citation>
    <scope>NUCLEOTIDE SEQUENCE [LARGE SCALE GENOMIC DNA]</scope>
</reference>
<reference key="3">
    <citation type="journal article" date="2004" name="Genome Res.">
        <title>The status, quality, and expansion of the NIH full-length cDNA project: the Mammalian Gene Collection (MGC).</title>
        <authorList>
            <consortium name="The MGC Project Team"/>
        </authorList>
    </citation>
    <scope>NUCLEOTIDE SEQUENCE [LARGE SCALE MRNA] (ISOFORM 2)</scope>
    <scope>VARIANT TYR-330</scope>
    <source>
        <tissue>Testis</tissue>
    </source>
</reference>
<accession>Q5T089</accession>
<accession>A6NKZ6</accession>
<accession>Q8WW30</accession>
<accession>Q9H852</accession>
<feature type="chain" id="PRO_0000247454" description="MORN repeat-containing protein 1">
    <location>
        <begin position="1"/>
        <end position="497"/>
    </location>
</feature>
<feature type="repeat" description="MORN 1">
    <location>
        <begin position="39"/>
        <end position="61"/>
    </location>
</feature>
<feature type="repeat" description="MORN 2">
    <location>
        <begin position="62"/>
        <end position="84"/>
    </location>
</feature>
<feature type="repeat" description="MORN 3">
    <location>
        <begin position="86"/>
        <end position="108"/>
    </location>
</feature>
<feature type="repeat" description="MORN 4">
    <location>
        <begin position="109"/>
        <end position="131"/>
    </location>
</feature>
<feature type="repeat" description="MORN 5">
    <location>
        <begin position="132"/>
        <end position="154"/>
    </location>
</feature>
<feature type="repeat" description="MORN 6">
    <location>
        <begin position="155"/>
        <end position="177"/>
    </location>
</feature>
<feature type="repeat" description="MORN 7">
    <location>
        <begin position="178"/>
        <end position="200"/>
    </location>
</feature>
<feature type="region of interest" description="Disordered" evidence="1">
    <location>
        <begin position="1"/>
        <end position="27"/>
    </location>
</feature>
<feature type="region of interest" description="Disordered" evidence="1">
    <location>
        <begin position="393"/>
        <end position="425"/>
    </location>
</feature>
<feature type="region of interest" description="Disordered" evidence="1">
    <location>
        <begin position="468"/>
        <end position="497"/>
    </location>
</feature>
<feature type="splice variant" id="VSP_019994" description="In isoform 2." evidence="3">
    <original>ARGHA</original>
    <variation>GSSLF</variation>
    <location>
        <begin position="346"/>
        <end position="350"/>
    </location>
</feature>
<feature type="splice variant" id="VSP_019995" description="In isoform 2." evidence="3">
    <location>
        <begin position="351"/>
        <end position="497"/>
    </location>
</feature>
<feature type="sequence variant" id="VAR_051199" description="In dbSNP:rs12130128.">
    <original>L</original>
    <variation>V</variation>
    <location>
        <position position="124"/>
    </location>
</feature>
<feature type="sequence variant" id="VAR_027105" description="In dbSNP:rs17851912." evidence="2">
    <original>H</original>
    <variation>Y</variation>
    <location>
        <position position="330"/>
    </location>
</feature>
<evidence type="ECO:0000256" key="1">
    <source>
        <dbReference type="SAM" id="MobiDB-lite"/>
    </source>
</evidence>
<evidence type="ECO:0000269" key="2">
    <source>
    </source>
</evidence>
<evidence type="ECO:0000303" key="3">
    <source>
    </source>
</evidence>